<reference key="1">
    <citation type="journal article" date="2012" name="PLoS ONE">
        <title>Two novel heat-soluble protein families abundantly expressed in an anhydrobiotic tardigrade.</title>
        <authorList>
            <person name="Yamaguchi A."/>
            <person name="Tanaka S."/>
            <person name="Yamaguchi S."/>
            <person name="Kuwahara H."/>
            <person name="Takamura C."/>
            <person name="Imajoh-Ohmi S."/>
            <person name="Horikawa D.D."/>
            <person name="Toyoda A."/>
            <person name="Katayama T."/>
            <person name="Arakawa K."/>
            <person name="Fujiyama A."/>
            <person name="Kubo T."/>
            <person name="Kunieda T."/>
        </authorList>
    </citation>
    <scope>NUCLEOTIDE SEQUENCE [MRNA]</scope>
    <scope>IDENTIFICATION BY MASS SPECTROMETRY</scope>
    <scope>FUNCTION</scope>
    <scope>DOMAIN</scope>
    <scope>SUBCELLULAR LOCATION</scope>
    <source>
        <strain>YOKOZUNA-1</strain>
    </source>
</reference>
<reference key="2">
    <citation type="journal article" date="2016" name="Nat. Commun.">
        <title>Extremotolerant tardigrade genome and improved radiotolerance of human cultured cells by tardigrade-unique protein.</title>
        <authorList>
            <person name="Hashimoto T."/>
            <person name="Horikawa D.D."/>
            <person name="Saito Y."/>
            <person name="Kuwahara H."/>
            <person name="Kozuka-Hata H."/>
            <person name="Shin-I T."/>
            <person name="Minakuchi Y."/>
            <person name="Ohishi K."/>
            <person name="Motoyama A."/>
            <person name="Aizu T."/>
            <person name="Enomoto A."/>
            <person name="Kondo K."/>
            <person name="Tanaka S."/>
            <person name="Hara Y."/>
            <person name="Koshikawa S."/>
            <person name="Sagara H."/>
            <person name="Miura T."/>
            <person name="Yokobori S."/>
            <person name="Miyagawa K."/>
            <person name="Suzuki Y."/>
            <person name="Kubo T."/>
            <person name="Oyama M."/>
            <person name="Kohara Y."/>
            <person name="Fujiyama A."/>
            <person name="Arakawa K."/>
            <person name="Katayama T."/>
            <person name="Toyoda A."/>
            <person name="Kunieda T."/>
        </authorList>
    </citation>
    <scope>NUCLEOTIDE SEQUENCE [LARGE SCALE GENOMIC DNA]</scope>
    <source>
        <strain>YOKOZUNA-1</strain>
    </source>
</reference>
<reference key="3">
    <citation type="journal article" date="2021" name="Mol. Cell">
        <title>Reconsidering the 'glass transition' hypothesis of intrinsically unstructured CAHS proteins in desiccation tolerance of tardigrades.</title>
        <authorList>
            <person name="Arakawa K."/>
            <person name="Numata K."/>
        </authorList>
    </citation>
    <scope>FUNCTION</scope>
</reference>
<gene>
    <name evidence="5" type="primary">CAHS3</name>
    <name type="ORF">RvY_16236</name>
</gene>
<accession>J7M3T1</accession>
<protein>
    <recommendedName>
        <fullName evidence="5">Cytosolic-abundant heat soluble protein 3</fullName>
        <shortName evidence="5">CAHS3</shortName>
    </recommendedName>
    <alternativeName>
        <fullName evidence="6">Tardigrade-specific intrinsically disordered protein CAHS3</fullName>
        <shortName evidence="6">TDP CAHS3</shortName>
    </alternativeName>
</protein>
<sequence length="303" mass="33128">MSSRQNQQSSSQHSSSSQQGGQGGQGVQGSSSYSRTEVHTSSGGPTIGGAQRTVPVPPGSHSEVHEEREVIKHGTKTESETHVVTVPVTTFGSTNMESVRTGFTVTQDKNLTVAAPNIAAPIHSNLDLNLGGGARAEITAGTTVDLSKIQRKDLGPEEYARYKAKVEQLARQDEQDAGMRAAQYREEVERDAELIRQILERQHIRDLEFRKEMVENQVNRQEREIQLEAEYAMRALELERNAAKEALESAKAQTNVNVKVESAIGTTVSKGAIQTSADKSSTTKTGPTTVTQIKHTEQHTERR</sequence>
<keyword id="KW-0175">Coiled coil</keyword>
<keyword id="KW-0963">Cytoplasm</keyword>
<keyword id="KW-1185">Reference proteome</keyword>
<keyword id="KW-0677">Repeat</keyword>
<keyword id="KW-0346">Stress response</keyword>
<evidence type="ECO:0000255" key="1"/>
<evidence type="ECO:0000256" key="2">
    <source>
        <dbReference type="SAM" id="MobiDB-lite"/>
    </source>
</evidence>
<evidence type="ECO:0000269" key="3">
    <source>
    </source>
</evidence>
<evidence type="ECO:0000269" key="4">
    <source>
    </source>
</evidence>
<evidence type="ECO:0000303" key="5">
    <source>
    </source>
</evidence>
<evidence type="ECO:0000305" key="6"/>
<evidence type="ECO:0000305" key="7">
    <source>
    </source>
</evidence>
<evidence type="ECO:0000305" key="8">
    <source>
    </source>
</evidence>
<feature type="chain" id="PRO_0000440189" description="Cytosolic-abundant heat soluble protein 3">
    <location>
        <begin position="1"/>
        <end position="303"/>
    </location>
</feature>
<feature type="region of interest" description="Disordered" evidence="2">
    <location>
        <begin position="1"/>
        <end position="67"/>
    </location>
</feature>
<feature type="region of interest" description="CAHS motif 1" evidence="7">
    <location>
        <begin position="184"/>
        <end position="202"/>
    </location>
</feature>
<feature type="region of interest" description="CAHS motif 2" evidence="7">
    <location>
        <begin position="221"/>
        <end position="239"/>
    </location>
</feature>
<feature type="region of interest" description="Disordered" evidence="2">
    <location>
        <begin position="270"/>
        <end position="303"/>
    </location>
</feature>
<feature type="coiled-coil region" evidence="1">
    <location>
        <begin position="170"/>
        <end position="257"/>
    </location>
</feature>
<feature type="compositionally biased region" description="Low complexity" evidence="2">
    <location>
        <begin position="1"/>
        <end position="19"/>
    </location>
</feature>
<feature type="compositionally biased region" description="Polar residues" evidence="2">
    <location>
        <begin position="270"/>
        <end position="280"/>
    </location>
</feature>
<feature type="compositionally biased region" description="Low complexity" evidence="2">
    <location>
        <begin position="282"/>
        <end position="291"/>
    </location>
</feature>
<feature type="compositionally biased region" description="Basic and acidic residues" evidence="2">
    <location>
        <begin position="294"/>
        <end position="303"/>
    </location>
</feature>
<dbReference type="EMBL" id="AB650501">
    <property type="protein sequence ID" value="BAM37960.1"/>
    <property type="molecule type" value="mRNA"/>
</dbReference>
<dbReference type="EMBL" id="BDGG01000013">
    <property type="protein sequence ID" value="GAV06214.1"/>
    <property type="molecule type" value="Genomic_DNA"/>
</dbReference>
<dbReference type="SMR" id="J7M3T1"/>
<dbReference type="OrthoDB" id="10590680at2759"/>
<dbReference type="Proteomes" id="UP000186922">
    <property type="component" value="Unassembled WGS sequence"/>
</dbReference>
<dbReference type="GO" id="GO:0005737">
    <property type="term" value="C:cytoplasm"/>
    <property type="evidence" value="ECO:0007669"/>
    <property type="project" value="UniProtKB-SubCell"/>
</dbReference>
<organism>
    <name type="scientific">Ramazzottius varieornatus</name>
    <name type="common">Water bear</name>
    <name type="synonym">Tardigrade</name>
    <dbReference type="NCBI Taxonomy" id="947166"/>
    <lineage>
        <taxon>Eukaryota</taxon>
        <taxon>Metazoa</taxon>
        <taxon>Ecdysozoa</taxon>
        <taxon>Tardigrada</taxon>
        <taxon>Eutardigrada</taxon>
        <taxon>Parachela</taxon>
        <taxon>Hypsibioidea</taxon>
        <taxon>Ramazzottiidae</taxon>
        <taxon>Ramazzottius</taxon>
    </lineage>
</organism>
<comment type="function">
    <text evidence="3 4 8">CAHS proteins are cytosolic heat soluble proteins that seem to contribute to the anhydrobiosis in tardigrades, but their specific mechanisms are yet to be identified (PubMed:22937162, PubMed:33545053). It is possible that protection during anhydrobiosis might occur via the stabilization of vitrifying small molecules such as sugars, but not via the direct glass transition of CAHS proteins themselves (Probable).</text>
</comment>
<comment type="subcellular location">
    <subcellularLocation>
        <location evidence="3">Cytoplasm</location>
    </subcellularLocation>
</comment>
<comment type="domain">
    <text evidence="7">CAHS proteins contain 2 repeats of 19-mer peptides designated as CAHS-motifs that comprise each two octapeptides connected by a tripeptide (PubMed:27649274).</text>
</comment>
<comment type="similarity">
    <text evidence="6">Belongs to the Cytosolic-abundant heat soluble protein (CAHS) family.</text>
</comment>
<proteinExistence type="evidence at protein level"/>
<name>CAHS3_RAMVA</name>